<sequence length="282" mass="31338">MKLVQTIKELQSELDALRSEGKTIGLVPTMGALHAGHASLVKRAVAENDVVVVSDFVNPTQFNDKNDLAKYPRTLDADCELLEKVGAAFVFAPSVEEIYPEPDTRQFSYAPLDTVMEGRFRPGHFNGVCQIVSKLFMIVNPTRAYFGEKDFQQLAIIREMVKQIGFNGLEIVGCPIVREEDGLALSSRNARLSAVEREYALNISQTLFKSCTFAKSHPVAETQKFVEDAIAAAPGLRLEYFEIVDGTTLQKITDWEDTDYAVGCITVFCGEVRLIDNIKYKG</sequence>
<name>PANC_PHOV8</name>
<proteinExistence type="inferred from homology"/>
<accession>A6L4C3</accession>
<evidence type="ECO:0000255" key="1">
    <source>
        <dbReference type="HAMAP-Rule" id="MF_00158"/>
    </source>
</evidence>
<dbReference type="EC" id="6.3.2.1" evidence="1"/>
<dbReference type="EMBL" id="CP000139">
    <property type="protein sequence ID" value="ABR40537.1"/>
    <property type="molecule type" value="Genomic_DNA"/>
</dbReference>
<dbReference type="RefSeq" id="WP_005843459.1">
    <property type="nucleotide sequence ID" value="NZ_JANSWM010000047.1"/>
</dbReference>
<dbReference type="SMR" id="A6L4C3"/>
<dbReference type="STRING" id="435590.BVU_2898"/>
<dbReference type="PaxDb" id="435590-BVU_2898"/>
<dbReference type="GeneID" id="93446787"/>
<dbReference type="KEGG" id="bvu:BVU_2898"/>
<dbReference type="eggNOG" id="COG0414">
    <property type="taxonomic scope" value="Bacteria"/>
</dbReference>
<dbReference type="HOGENOM" id="CLU_047148_0_0_10"/>
<dbReference type="BioCyc" id="BVUL435590:G1G59-3018-MONOMER"/>
<dbReference type="UniPathway" id="UPA00028">
    <property type="reaction ID" value="UER00005"/>
</dbReference>
<dbReference type="Proteomes" id="UP000002861">
    <property type="component" value="Chromosome"/>
</dbReference>
<dbReference type="GO" id="GO:0005829">
    <property type="term" value="C:cytosol"/>
    <property type="evidence" value="ECO:0007669"/>
    <property type="project" value="TreeGrafter"/>
</dbReference>
<dbReference type="GO" id="GO:0005524">
    <property type="term" value="F:ATP binding"/>
    <property type="evidence" value="ECO:0007669"/>
    <property type="project" value="UniProtKB-KW"/>
</dbReference>
<dbReference type="GO" id="GO:0004592">
    <property type="term" value="F:pantoate-beta-alanine ligase activity"/>
    <property type="evidence" value="ECO:0007669"/>
    <property type="project" value="UniProtKB-UniRule"/>
</dbReference>
<dbReference type="GO" id="GO:0015940">
    <property type="term" value="P:pantothenate biosynthetic process"/>
    <property type="evidence" value="ECO:0007669"/>
    <property type="project" value="UniProtKB-UniRule"/>
</dbReference>
<dbReference type="CDD" id="cd00560">
    <property type="entry name" value="PanC"/>
    <property type="match status" value="1"/>
</dbReference>
<dbReference type="FunFam" id="3.40.50.620:FF:000013">
    <property type="entry name" value="Pantothenate synthetase"/>
    <property type="match status" value="1"/>
</dbReference>
<dbReference type="Gene3D" id="3.40.50.620">
    <property type="entry name" value="HUPs"/>
    <property type="match status" value="1"/>
</dbReference>
<dbReference type="Gene3D" id="3.30.1300.10">
    <property type="entry name" value="Pantoate-beta-alanine ligase, C-terminal domain"/>
    <property type="match status" value="1"/>
</dbReference>
<dbReference type="HAMAP" id="MF_00158">
    <property type="entry name" value="PanC"/>
    <property type="match status" value="1"/>
</dbReference>
<dbReference type="InterPro" id="IPR003721">
    <property type="entry name" value="Pantoate_ligase"/>
</dbReference>
<dbReference type="InterPro" id="IPR042176">
    <property type="entry name" value="Pantoate_ligase_C"/>
</dbReference>
<dbReference type="InterPro" id="IPR014729">
    <property type="entry name" value="Rossmann-like_a/b/a_fold"/>
</dbReference>
<dbReference type="NCBIfam" id="TIGR00018">
    <property type="entry name" value="panC"/>
    <property type="match status" value="1"/>
</dbReference>
<dbReference type="PANTHER" id="PTHR21299">
    <property type="entry name" value="CYTIDYLATE KINASE/PANTOATE-BETA-ALANINE LIGASE"/>
    <property type="match status" value="1"/>
</dbReference>
<dbReference type="PANTHER" id="PTHR21299:SF1">
    <property type="entry name" value="PANTOATE--BETA-ALANINE LIGASE"/>
    <property type="match status" value="1"/>
</dbReference>
<dbReference type="Pfam" id="PF02569">
    <property type="entry name" value="Pantoate_ligase"/>
    <property type="match status" value="1"/>
</dbReference>
<dbReference type="SUPFAM" id="SSF52374">
    <property type="entry name" value="Nucleotidylyl transferase"/>
    <property type="match status" value="1"/>
</dbReference>
<keyword id="KW-0067">ATP-binding</keyword>
<keyword id="KW-0963">Cytoplasm</keyword>
<keyword id="KW-0436">Ligase</keyword>
<keyword id="KW-0547">Nucleotide-binding</keyword>
<keyword id="KW-0566">Pantothenate biosynthesis</keyword>
<organism>
    <name type="scientific">Phocaeicola vulgatus (strain ATCC 8482 / DSM 1447 / JCM 5826 / CCUG 4940 / NBRC 14291 / NCTC 11154)</name>
    <name type="common">Bacteroides vulgatus</name>
    <dbReference type="NCBI Taxonomy" id="435590"/>
    <lineage>
        <taxon>Bacteria</taxon>
        <taxon>Pseudomonadati</taxon>
        <taxon>Bacteroidota</taxon>
        <taxon>Bacteroidia</taxon>
        <taxon>Bacteroidales</taxon>
        <taxon>Bacteroidaceae</taxon>
        <taxon>Phocaeicola</taxon>
    </lineage>
</organism>
<gene>
    <name evidence="1" type="primary">panC</name>
    <name type="ordered locus">BVU_2898</name>
</gene>
<feature type="chain" id="PRO_0000305401" description="Pantothenate synthetase">
    <location>
        <begin position="1"/>
        <end position="282"/>
    </location>
</feature>
<feature type="active site" description="Proton donor" evidence="1">
    <location>
        <position position="37"/>
    </location>
</feature>
<feature type="binding site" evidence="1">
    <location>
        <begin position="30"/>
        <end position="37"/>
    </location>
    <ligand>
        <name>ATP</name>
        <dbReference type="ChEBI" id="CHEBI:30616"/>
    </ligand>
</feature>
<feature type="binding site" evidence="1">
    <location>
        <position position="61"/>
    </location>
    <ligand>
        <name>(R)-pantoate</name>
        <dbReference type="ChEBI" id="CHEBI:15980"/>
    </ligand>
</feature>
<feature type="binding site" evidence="1">
    <location>
        <position position="61"/>
    </location>
    <ligand>
        <name>beta-alanine</name>
        <dbReference type="ChEBI" id="CHEBI:57966"/>
    </ligand>
</feature>
<feature type="binding site" evidence="1">
    <location>
        <begin position="147"/>
        <end position="150"/>
    </location>
    <ligand>
        <name>ATP</name>
        <dbReference type="ChEBI" id="CHEBI:30616"/>
    </ligand>
</feature>
<feature type="binding site" evidence="1">
    <location>
        <position position="153"/>
    </location>
    <ligand>
        <name>(R)-pantoate</name>
        <dbReference type="ChEBI" id="CHEBI:15980"/>
    </ligand>
</feature>
<feature type="binding site" evidence="1">
    <location>
        <position position="177"/>
    </location>
    <ligand>
        <name>ATP</name>
        <dbReference type="ChEBI" id="CHEBI:30616"/>
    </ligand>
</feature>
<feature type="binding site" evidence="1">
    <location>
        <begin position="185"/>
        <end position="188"/>
    </location>
    <ligand>
        <name>ATP</name>
        <dbReference type="ChEBI" id="CHEBI:30616"/>
    </ligand>
</feature>
<protein>
    <recommendedName>
        <fullName evidence="1">Pantothenate synthetase</fullName>
        <shortName evidence="1">PS</shortName>
        <ecNumber evidence="1">6.3.2.1</ecNumber>
    </recommendedName>
    <alternativeName>
        <fullName evidence="1">Pantoate--beta-alanine ligase</fullName>
    </alternativeName>
    <alternativeName>
        <fullName evidence="1">Pantoate-activating enzyme</fullName>
    </alternativeName>
</protein>
<reference key="1">
    <citation type="journal article" date="2007" name="PLoS Biol.">
        <title>Evolution of symbiotic bacteria in the distal human intestine.</title>
        <authorList>
            <person name="Xu J."/>
            <person name="Mahowald M.A."/>
            <person name="Ley R.E."/>
            <person name="Lozupone C.A."/>
            <person name="Hamady M."/>
            <person name="Martens E.C."/>
            <person name="Henrissat B."/>
            <person name="Coutinho P.M."/>
            <person name="Minx P."/>
            <person name="Latreille P."/>
            <person name="Cordum H."/>
            <person name="Van Brunt A."/>
            <person name="Kim K."/>
            <person name="Fulton R.S."/>
            <person name="Fulton L.A."/>
            <person name="Clifton S.W."/>
            <person name="Wilson R.K."/>
            <person name="Knight R.D."/>
            <person name="Gordon J.I."/>
        </authorList>
    </citation>
    <scope>NUCLEOTIDE SEQUENCE [LARGE SCALE GENOMIC DNA]</scope>
    <source>
        <strain>ATCC 8482 / DSM 1447 / JCM 5826 / CCUG 4940 / NBRC 14291 / NCTC 11154</strain>
    </source>
</reference>
<comment type="function">
    <text evidence="1">Catalyzes the condensation of pantoate with beta-alanine in an ATP-dependent reaction via a pantoyl-adenylate intermediate.</text>
</comment>
<comment type="catalytic activity">
    <reaction evidence="1">
        <text>(R)-pantoate + beta-alanine + ATP = (R)-pantothenate + AMP + diphosphate + H(+)</text>
        <dbReference type="Rhea" id="RHEA:10912"/>
        <dbReference type="ChEBI" id="CHEBI:15378"/>
        <dbReference type="ChEBI" id="CHEBI:15980"/>
        <dbReference type="ChEBI" id="CHEBI:29032"/>
        <dbReference type="ChEBI" id="CHEBI:30616"/>
        <dbReference type="ChEBI" id="CHEBI:33019"/>
        <dbReference type="ChEBI" id="CHEBI:57966"/>
        <dbReference type="ChEBI" id="CHEBI:456215"/>
        <dbReference type="EC" id="6.3.2.1"/>
    </reaction>
</comment>
<comment type="pathway">
    <text evidence="1">Cofactor biosynthesis; (R)-pantothenate biosynthesis; (R)-pantothenate from (R)-pantoate and beta-alanine: step 1/1.</text>
</comment>
<comment type="subunit">
    <text evidence="1">Homodimer.</text>
</comment>
<comment type="subcellular location">
    <subcellularLocation>
        <location evidence="1">Cytoplasm</location>
    </subcellularLocation>
</comment>
<comment type="miscellaneous">
    <text evidence="1">The reaction proceeds by a bi uni uni bi ping pong mechanism.</text>
</comment>
<comment type="similarity">
    <text evidence="1">Belongs to the pantothenate synthetase family.</text>
</comment>